<organism>
    <name type="scientific">Legionella pneumophila (strain Corby)</name>
    <dbReference type="NCBI Taxonomy" id="400673"/>
    <lineage>
        <taxon>Bacteria</taxon>
        <taxon>Pseudomonadati</taxon>
        <taxon>Pseudomonadota</taxon>
        <taxon>Gammaproteobacteria</taxon>
        <taxon>Legionellales</taxon>
        <taxon>Legionellaceae</taxon>
        <taxon>Legionella</taxon>
    </lineage>
</organism>
<dbReference type="EC" id="1.2.1.71" evidence="1"/>
<dbReference type="EMBL" id="CP000675">
    <property type="protein sequence ID" value="ABQ55103.1"/>
    <property type="molecule type" value="Genomic_DNA"/>
</dbReference>
<dbReference type="RefSeq" id="WP_011946665.1">
    <property type="nucleotide sequence ID" value="NZ_JAPMSS010000002.1"/>
</dbReference>
<dbReference type="SMR" id="A5ICK3"/>
<dbReference type="GeneID" id="57035696"/>
<dbReference type="KEGG" id="lpc:LPC_1136"/>
<dbReference type="HOGENOM" id="CLU_005391_1_0_6"/>
<dbReference type="UniPathway" id="UPA00185">
    <property type="reaction ID" value="UER00282"/>
</dbReference>
<dbReference type="GO" id="GO:0009898">
    <property type="term" value="C:cytoplasmic side of plasma membrane"/>
    <property type="evidence" value="ECO:0007669"/>
    <property type="project" value="TreeGrafter"/>
</dbReference>
<dbReference type="GO" id="GO:0003842">
    <property type="term" value="F:1-pyrroline-5-carboxylate dehydrogenase activity"/>
    <property type="evidence" value="ECO:0007669"/>
    <property type="project" value="TreeGrafter"/>
</dbReference>
<dbReference type="GO" id="GO:0043824">
    <property type="term" value="F:succinylglutamate-semialdehyde dehydrogenase activity"/>
    <property type="evidence" value="ECO:0007669"/>
    <property type="project" value="UniProtKB-EC"/>
</dbReference>
<dbReference type="GO" id="GO:0019544">
    <property type="term" value="P:arginine catabolic process to glutamate"/>
    <property type="evidence" value="ECO:0007669"/>
    <property type="project" value="UniProtKB-UniRule"/>
</dbReference>
<dbReference type="GO" id="GO:0019545">
    <property type="term" value="P:arginine catabolic process to succinate"/>
    <property type="evidence" value="ECO:0007669"/>
    <property type="project" value="UniProtKB-UniRule"/>
</dbReference>
<dbReference type="GO" id="GO:0010133">
    <property type="term" value="P:proline catabolic process to glutamate"/>
    <property type="evidence" value="ECO:0007669"/>
    <property type="project" value="TreeGrafter"/>
</dbReference>
<dbReference type="CDD" id="cd07095">
    <property type="entry name" value="ALDH_SGSD_AstD"/>
    <property type="match status" value="1"/>
</dbReference>
<dbReference type="FunFam" id="3.40.605.10:FF:000010">
    <property type="entry name" value="N-succinylglutamate 5-semialdehyde dehydrogenase"/>
    <property type="match status" value="1"/>
</dbReference>
<dbReference type="Gene3D" id="3.40.605.10">
    <property type="entry name" value="Aldehyde Dehydrogenase, Chain A, domain 1"/>
    <property type="match status" value="1"/>
</dbReference>
<dbReference type="Gene3D" id="3.40.309.10">
    <property type="entry name" value="Aldehyde Dehydrogenase, Chain A, domain 2"/>
    <property type="match status" value="1"/>
</dbReference>
<dbReference type="HAMAP" id="MF_01174">
    <property type="entry name" value="Aldedh_AstD"/>
    <property type="match status" value="1"/>
</dbReference>
<dbReference type="InterPro" id="IPR016161">
    <property type="entry name" value="Ald_DH/histidinol_DH"/>
</dbReference>
<dbReference type="InterPro" id="IPR016163">
    <property type="entry name" value="Ald_DH_C"/>
</dbReference>
<dbReference type="InterPro" id="IPR029510">
    <property type="entry name" value="Ald_DH_CS_GLU"/>
</dbReference>
<dbReference type="InterPro" id="IPR016162">
    <property type="entry name" value="Ald_DH_N"/>
</dbReference>
<dbReference type="InterPro" id="IPR015590">
    <property type="entry name" value="Aldehyde_DH_dom"/>
</dbReference>
<dbReference type="InterPro" id="IPR050485">
    <property type="entry name" value="Proline_metab_enzyme"/>
</dbReference>
<dbReference type="InterPro" id="IPR017649">
    <property type="entry name" value="SuccinylGlu_semiald_DH_AstD"/>
</dbReference>
<dbReference type="NCBIfam" id="TIGR03240">
    <property type="entry name" value="arg_catab_astD"/>
    <property type="match status" value="1"/>
</dbReference>
<dbReference type="NCBIfam" id="NF006992">
    <property type="entry name" value="PRK09457.1"/>
    <property type="match status" value="1"/>
</dbReference>
<dbReference type="PANTHER" id="PTHR42862">
    <property type="entry name" value="DELTA-1-PYRROLINE-5-CARBOXYLATE DEHYDROGENASE 1, ISOFORM A-RELATED"/>
    <property type="match status" value="1"/>
</dbReference>
<dbReference type="PANTHER" id="PTHR42862:SF1">
    <property type="entry name" value="DELTA-1-PYRROLINE-5-CARBOXYLATE DEHYDROGENASE 2, ISOFORM A-RELATED"/>
    <property type="match status" value="1"/>
</dbReference>
<dbReference type="Pfam" id="PF00171">
    <property type="entry name" value="Aldedh"/>
    <property type="match status" value="1"/>
</dbReference>
<dbReference type="SUPFAM" id="SSF53720">
    <property type="entry name" value="ALDH-like"/>
    <property type="match status" value="1"/>
</dbReference>
<dbReference type="PROSITE" id="PS00687">
    <property type="entry name" value="ALDEHYDE_DEHYDR_GLU"/>
    <property type="match status" value="1"/>
</dbReference>
<reference key="1">
    <citation type="submission" date="2006-11" db="EMBL/GenBank/DDBJ databases">
        <title>Identification and characterization of a new conjugation/ type IVA secretion system (trb/tra) of L. pneumophila Corby localized on a mobile genomic island.</title>
        <authorList>
            <person name="Gloeckner G."/>
            <person name="Albert-Weissenberger C."/>
            <person name="Weinmann E."/>
            <person name="Jacobi S."/>
            <person name="Schunder E."/>
            <person name="Steinert M."/>
            <person name="Buchrieser C."/>
            <person name="Hacker J."/>
            <person name="Heuner K."/>
        </authorList>
    </citation>
    <scope>NUCLEOTIDE SEQUENCE [LARGE SCALE GENOMIC DNA]</scope>
    <source>
        <strain>Corby</strain>
    </source>
</reference>
<sequence>MSKLQIIQSKGQYINGEWIKGNGLILESTNPASGTLLWQGNNATDEEIANACYVAHRALKSWANTSFEERARYTKAFVEQVEKNREQLARLISLETGKPLWESQTEVSSVIGKVNLSIQAYQERTWPKQTETAEANACLRFKPHGIVVVLGAFNFPAHLSNGHIVPALLAGNTVLYKPSEHTPAVAELIIQCWHDSGLPPGVINCLQGNANCGNTLLSQDIQGVYFTGSYATGLRIHQQFCNRPEVILALEMGGNNPLVIDEVKDIDAAVYHTILSTMITAGQRCTCARRIIIPDSQTGDLFLERFAKACKLMRIGSFDSQPEPFIGPVISHVQALKHLHAQKQLIEMGGEIILPMSLLLEYTGLVSPGIIDMTRAKNPPDEEIFAPFAQIYRYNHFDEAIQLANQTRYGLSAGLLSDNKDHYQQFYQNIRAGLINWNRPTTGAASSLPFGGVGCSGNHRPSAYFAADYCAYPVASMEQPLLTTPVQRLPGLVLE</sequence>
<accession>A5ICK3</accession>
<proteinExistence type="inferred from homology"/>
<keyword id="KW-0056">Arginine metabolism</keyword>
<keyword id="KW-0520">NAD</keyword>
<keyword id="KW-0560">Oxidoreductase</keyword>
<name>ASTD_LEGPC</name>
<feature type="chain" id="PRO_1000065759" description="N-succinylglutamate 5-semialdehyde dehydrogenase">
    <location>
        <begin position="1"/>
        <end position="495"/>
    </location>
</feature>
<feature type="active site" evidence="1">
    <location>
        <position position="251"/>
    </location>
</feature>
<feature type="active site" evidence="1">
    <location>
        <position position="285"/>
    </location>
</feature>
<feature type="binding site" evidence="1">
    <location>
        <begin position="228"/>
        <end position="233"/>
    </location>
    <ligand>
        <name>NAD(+)</name>
        <dbReference type="ChEBI" id="CHEBI:57540"/>
    </ligand>
</feature>
<gene>
    <name evidence="1" type="primary">astD</name>
    <name type="ordered locus">LPC_1136</name>
</gene>
<evidence type="ECO:0000255" key="1">
    <source>
        <dbReference type="HAMAP-Rule" id="MF_01174"/>
    </source>
</evidence>
<comment type="function">
    <text evidence="1">Catalyzes the NAD-dependent reduction of succinylglutamate semialdehyde into succinylglutamate.</text>
</comment>
<comment type="catalytic activity">
    <reaction evidence="1">
        <text>N-succinyl-L-glutamate 5-semialdehyde + NAD(+) + H2O = N-succinyl-L-glutamate + NADH + 2 H(+)</text>
        <dbReference type="Rhea" id="RHEA:10812"/>
        <dbReference type="ChEBI" id="CHEBI:15377"/>
        <dbReference type="ChEBI" id="CHEBI:15378"/>
        <dbReference type="ChEBI" id="CHEBI:57540"/>
        <dbReference type="ChEBI" id="CHEBI:57945"/>
        <dbReference type="ChEBI" id="CHEBI:58520"/>
        <dbReference type="ChEBI" id="CHEBI:58763"/>
        <dbReference type="EC" id="1.2.1.71"/>
    </reaction>
</comment>
<comment type="pathway">
    <text evidence="1">Amino-acid degradation; L-arginine degradation via AST pathway; L-glutamate and succinate from L-arginine: step 4/5.</text>
</comment>
<comment type="similarity">
    <text evidence="1">Belongs to the aldehyde dehydrogenase family. AstD subfamily.</text>
</comment>
<protein>
    <recommendedName>
        <fullName evidence="1">N-succinylglutamate 5-semialdehyde dehydrogenase</fullName>
        <ecNumber evidence="1">1.2.1.71</ecNumber>
    </recommendedName>
    <alternativeName>
        <fullName evidence="1">Succinylglutamic semialdehyde dehydrogenase</fullName>
        <shortName evidence="1">SGSD</shortName>
    </alternativeName>
</protein>